<feature type="chain" id="PRO_0000301749" description="Topoisomerase 1-associated factor 1">
    <location>
        <begin position="1"/>
        <end position="1054"/>
    </location>
</feature>
<feature type="region of interest" description="Disordered" evidence="2">
    <location>
        <begin position="522"/>
        <end position="543"/>
    </location>
</feature>
<feature type="region of interest" description="Disordered" evidence="2">
    <location>
        <begin position="823"/>
        <end position="846"/>
    </location>
</feature>
<feature type="region of interest" description="Disordered" evidence="2">
    <location>
        <begin position="865"/>
        <end position="953"/>
    </location>
</feature>
<feature type="region of interest" description="Disordered" evidence="2">
    <location>
        <begin position="968"/>
        <end position="1054"/>
    </location>
</feature>
<feature type="compositionally biased region" description="Basic and acidic residues" evidence="2">
    <location>
        <begin position="823"/>
        <end position="838"/>
    </location>
</feature>
<feature type="compositionally biased region" description="Basic residues" evidence="2">
    <location>
        <begin position="877"/>
        <end position="887"/>
    </location>
</feature>
<feature type="compositionally biased region" description="Basic and acidic residues" evidence="2">
    <location>
        <begin position="890"/>
        <end position="901"/>
    </location>
</feature>
<feature type="compositionally biased region" description="Basic and acidic residues" evidence="2">
    <location>
        <begin position="928"/>
        <end position="953"/>
    </location>
</feature>
<feature type="compositionally biased region" description="Basic and acidic residues" evidence="2">
    <location>
        <begin position="979"/>
        <end position="1017"/>
    </location>
</feature>
<gene>
    <name type="primary">TOF1</name>
    <name type="ordered locus">YALI0B06512g</name>
</gene>
<reference key="1">
    <citation type="journal article" date="2004" name="Nature">
        <title>Genome evolution in yeasts.</title>
        <authorList>
            <person name="Dujon B."/>
            <person name="Sherman D."/>
            <person name="Fischer G."/>
            <person name="Durrens P."/>
            <person name="Casaregola S."/>
            <person name="Lafontaine I."/>
            <person name="de Montigny J."/>
            <person name="Marck C."/>
            <person name="Neuveglise C."/>
            <person name="Talla E."/>
            <person name="Goffard N."/>
            <person name="Frangeul L."/>
            <person name="Aigle M."/>
            <person name="Anthouard V."/>
            <person name="Babour A."/>
            <person name="Barbe V."/>
            <person name="Barnay S."/>
            <person name="Blanchin S."/>
            <person name="Beckerich J.-M."/>
            <person name="Beyne E."/>
            <person name="Bleykasten C."/>
            <person name="Boisrame A."/>
            <person name="Boyer J."/>
            <person name="Cattolico L."/>
            <person name="Confanioleri F."/>
            <person name="de Daruvar A."/>
            <person name="Despons L."/>
            <person name="Fabre E."/>
            <person name="Fairhead C."/>
            <person name="Ferry-Dumazet H."/>
            <person name="Groppi A."/>
            <person name="Hantraye F."/>
            <person name="Hennequin C."/>
            <person name="Jauniaux N."/>
            <person name="Joyet P."/>
            <person name="Kachouri R."/>
            <person name="Kerrest A."/>
            <person name="Koszul R."/>
            <person name="Lemaire M."/>
            <person name="Lesur I."/>
            <person name="Ma L."/>
            <person name="Muller H."/>
            <person name="Nicaud J.-M."/>
            <person name="Nikolski M."/>
            <person name="Oztas S."/>
            <person name="Ozier-Kalogeropoulos O."/>
            <person name="Pellenz S."/>
            <person name="Potier S."/>
            <person name="Richard G.-F."/>
            <person name="Straub M.-L."/>
            <person name="Suleau A."/>
            <person name="Swennen D."/>
            <person name="Tekaia F."/>
            <person name="Wesolowski-Louvel M."/>
            <person name="Westhof E."/>
            <person name="Wirth B."/>
            <person name="Zeniou-Meyer M."/>
            <person name="Zivanovic Y."/>
            <person name="Bolotin-Fukuhara M."/>
            <person name="Thierry A."/>
            <person name="Bouchier C."/>
            <person name="Caudron B."/>
            <person name="Scarpelli C."/>
            <person name="Gaillardin C."/>
            <person name="Weissenbach J."/>
            <person name="Wincker P."/>
            <person name="Souciet J.-L."/>
        </authorList>
    </citation>
    <scope>NUCLEOTIDE SEQUENCE [LARGE SCALE GENOMIC DNA]</scope>
    <source>
        <strain>CLIB 122 / E 150</strain>
    </source>
</reference>
<evidence type="ECO:0000250" key="1"/>
<evidence type="ECO:0000256" key="2">
    <source>
        <dbReference type="SAM" id="MobiDB-lite"/>
    </source>
</evidence>
<evidence type="ECO:0000305" key="3"/>
<organism>
    <name type="scientific">Yarrowia lipolytica (strain CLIB 122 / E 150)</name>
    <name type="common">Yeast</name>
    <name type="synonym">Candida lipolytica</name>
    <dbReference type="NCBI Taxonomy" id="284591"/>
    <lineage>
        <taxon>Eukaryota</taxon>
        <taxon>Fungi</taxon>
        <taxon>Dikarya</taxon>
        <taxon>Ascomycota</taxon>
        <taxon>Saccharomycotina</taxon>
        <taxon>Dipodascomycetes</taxon>
        <taxon>Dipodascales</taxon>
        <taxon>Dipodascales incertae sedis</taxon>
        <taxon>Yarrowia</taxon>
    </lineage>
</organism>
<protein>
    <recommendedName>
        <fullName>Topoisomerase 1-associated factor 1</fullName>
    </recommendedName>
</protein>
<dbReference type="EMBL" id="CR382128">
    <property type="protein sequence ID" value="CAG82801.1"/>
    <property type="molecule type" value="Genomic_DNA"/>
</dbReference>
<dbReference type="RefSeq" id="XP_500570.1">
    <property type="nucleotide sequence ID" value="XM_500570.1"/>
</dbReference>
<dbReference type="SMR" id="Q6CFJ2"/>
<dbReference type="FunCoup" id="Q6CFJ2">
    <property type="interactions" value="49"/>
</dbReference>
<dbReference type="STRING" id="284591.Q6CFJ2"/>
<dbReference type="EnsemblFungi" id="CAG82801">
    <property type="protein sequence ID" value="CAG82801"/>
    <property type="gene ID" value="YALI0_B06512g"/>
</dbReference>
<dbReference type="KEGG" id="yli:2907602"/>
<dbReference type="VEuPathDB" id="FungiDB:YALI0_B06512g"/>
<dbReference type="HOGENOM" id="CLU_004390_0_0_1"/>
<dbReference type="InParanoid" id="Q6CFJ2"/>
<dbReference type="OMA" id="MHRIAIK"/>
<dbReference type="OrthoDB" id="23041at4891"/>
<dbReference type="Proteomes" id="UP000001300">
    <property type="component" value="Chromosome B"/>
</dbReference>
<dbReference type="GO" id="GO:0031298">
    <property type="term" value="C:replication fork protection complex"/>
    <property type="evidence" value="ECO:0000318"/>
    <property type="project" value="GO_Central"/>
</dbReference>
<dbReference type="GO" id="GO:0003677">
    <property type="term" value="F:DNA binding"/>
    <property type="evidence" value="ECO:0000318"/>
    <property type="project" value="GO_Central"/>
</dbReference>
<dbReference type="GO" id="GO:0006281">
    <property type="term" value="P:DNA repair"/>
    <property type="evidence" value="ECO:0000318"/>
    <property type="project" value="GO_Central"/>
</dbReference>
<dbReference type="GO" id="GO:0000076">
    <property type="term" value="P:DNA replication checkpoint signaling"/>
    <property type="evidence" value="ECO:0000318"/>
    <property type="project" value="GO_Central"/>
</dbReference>
<dbReference type="GO" id="GO:0051321">
    <property type="term" value="P:meiotic cell cycle"/>
    <property type="evidence" value="ECO:0007669"/>
    <property type="project" value="UniProtKB-KW"/>
</dbReference>
<dbReference type="GO" id="GO:0043111">
    <property type="term" value="P:replication fork arrest"/>
    <property type="evidence" value="ECO:0000318"/>
    <property type="project" value="GO_Central"/>
</dbReference>
<dbReference type="InterPro" id="IPR044998">
    <property type="entry name" value="Timeless"/>
</dbReference>
<dbReference type="InterPro" id="IPR006906">
    <property type="entry name" value="Timeless_N"/>
</dbReference>
<dbReference type="PANTHER" id="PTHR22940:SF4">
    <property type="entry name" value="PROTEIN TIMELESS HOMOLOG"/>
    <property type="match status" value="1"/>
</dbReference>
<dbReference type="PANTHER" id="PTHR22940">
    <property type="entry name" value="TIMEOUT/TIMELESS-2"/>
    <property type="match status" value="1"/>
</dbReference>
<dbReference type="Pfam" id="PF04821">
    <property type="entry name" value="TIMELESS"/>
    <property type="match status" value="1"/>
</dbReference>
<sequence>MEEVDRLVTASITSIVSALGGCDLASEDASYVLGEEALACLKDVKQWLRAFDEKLGRSDVAKCIASTTLVVSDIPSILSTWNTQSEAGQASKKMDRVALACLEILVPLLWPIEINDETPDNVVASADLLRQAQIRYKRALLGHPSKSILKAVVRLCIPSVAKSKADRDQRDIGIMKLVVFFIRNMLAIDPMEANGKTDDINRSAILEAFENQGVLDLMLTLGSCTGYDIVGVDLPLLDSLYQMVKGLDVVEIFETSPNEPDNQLKNLLDTERRNKPVGSSRHSRFASTMTVLHNGSKISVTGPTASIEKSLEKFDKSKQPGRRLTKPTTGVWEVPVFVGHSAKRYIRVFSELFNDSAFNPLMQTVRKALEQEDDIGPAFKHYLVVLKWFLGVEMHRKTPDFGLIASVVNQEAFIIIMRSIRQGVQAKNWTMVKTAMDSFKTTLVVVNLMSDEEVASNIKARLFYEEEYLTMLADLTRRWALPLTFLQSAVDMTHTLIKTLESFTKANTTLYVRRRRLRAQKKADDTGNVEDLESLPGEEHESAIESRERKFNFSSFESRYFHEDTFTTYRMVLSSFQQLDNCYLGWCLKFLDRAFNKRKCRVMLFRLDYLQLFRTMVKELNSSNPWRKPFEHFFKKYMRQMIPMMKERPCLMVEVIFAKIPGTLHYLESGEEKPVRELKERTSKFVYEFTEGDDIPEERKVCILVASLLDEEKKQLVEWFIDELDSLLRARTGDTQVLNPPKATDELNVPKSIDEDDKFRLLMELVGFTLSRIPKSSVGCKTLCSLPGEVSRADIERATGWLKQWYSTPVDFEPFNKIKRVRRDDKERRGAGGDKEGSQDAEEDDELPLFLASDSEDDIENINDEMFAPVPKEKQQKTKQKLKRKGTSKSTREREKQRDYTAKTTIDIPMSYKSADFIGASDDDSDDERDRKFFEKENELREELRKAEPTINLEEKVDKAFKRQYAYVSDGEEEPLSETESHKQYREKVDEDRDDLSHMAERENRQYDFGDEGHDSDNLEIIDDDSKSPVAAEGTTSSQPIRKRRIVDDSDDDE</sequence>
<proteinExistence type="inferred from homology"/>
<comment type="function">
    <text evidence="1">Forms a fork protection complex (FPC) with CSM3 and which is required for chromosome segregation during meiosis and DNA damage repair. FPC coordinates leading and lagging strand synthesis and moves with the replication fork. FPC stabilizes replication forks in a configuration that is recognized by replication checkpoint sensors (By similarity).</text>
</comment>
<comment type="subunit">
    <text evidence="1">Component of the fork protection complex (FPC) consisting of TOF1 and CSM3.</text>
</comment>
<comment type="subcellular location">
    <subcellularLocation>
        <location evidence="1">Nucleus</location>
    </subcellularLocation>
</comment>
<comment type="similarity">
    <text evidence="3">Belongs to the timeless family.</text>
</comment>
<accession>Q6CFJ2</accession>
<keyword id="KW-0131">Cell cycle</keyword>
<keyword id="KW-0227">DNA damage</keyword>
<keyword id="KW-0234">DNA repair</keyword>
<keyword id="KW-0236">DNA replication inhibitor</keyword>
<keyword id="KW-0469">Meiosis</keyword>
<keyword id="KW-0539">Nucleus</keyword>
<keyword id="KW-1185">Reference proteome</keyword>
<name>TOF1_YARLI</name>